<feature type="chain" id="PRO_0000123615" description="Isoprenyl transferase">
    <location>
        <begin position="1"/>
        <end position="230"/>
    </location>
</feature>
<feature type="active site" evidence="1">
    <location>
        <position position="14"/>
    </location>
</feature>
<feature type="active site" description="Proton acceptor" evidence="1">
    <location>
        <position position="62"/>
    </location>
</feature>
<feature type="binding site" evidence="1">
    <location>
        <position position="14"/>
    </location>
    <ligand>
        <name>Mg(2+)</name>
        <dbReference type="ChEBI" id="CHEBI:18420"/>
    </ligand>
</feature>
<feature type="binding site" evidence="1">
    <location>
        <begin position="15"/>
        <end position="18"/>
    </location>
    <ligand>
        <name>substrate</name>
    </ligand>
</feature>
<feature type="binding site" evidence="1">
    <location>
        <position position="19"/>
    </location>
    <ligand>
        <name>substrate</name>
    </ligand>
</feature>
<feature type="binding site" evidence="1">
    <location>
        <position position="27"/>
    </location>
    <ligand>
        <name>substrate</name>
    </ligand>
</feature>
<feature type="binding site" evidence="1">
    <location>
        <position position="31"/>
    </location>
    <ligand>
        <name>substrate</name>
    </ligand>
</feature>
<feature type="binding site" evidence="1">
    <location>
        <begin position="59"/>
        <end position="61"/>
    </location>
    <ligand>
        <name>substrate</name>
    </ligand>
</feature>
<feature type="binding site" evidence="1">
    <location>
        <position position="63"/>
    </location>
    <ligand>
        <name>substrate</name>
    </ligand>
</feature>
<feature type="binding site" evidence="1">
    <location>
        <position position="65"/>
    </location>
    <ligand>
        <name>substrate</name>
    </ligand>
</feature>
<feature type="binding site" evidence="1">
    <location>
        <position position="175"/>
    </location>
    <ligand>
        <name>substrate</name>
    </ligand>
</feature>
<feature type="binding site" evidence="1">
    <location>
        <begin position="181"/>
        <end position="183"/>
    </location>
    <ligand>
        <name>substrate</name>
    </ligand>
</feature>
<feature type="binding site" evidence="1">
    <location>
        <position position="194"/>
    </location>
    <ligand>
        <name>Mg(2+)</name>
        <dbReference type="ChEBI" id="CHEBI:18420"/>
    </ligand>
</feature>
<dbReference type="EC" id="2.5.1.-" evidence="1"/>
<dbReference type="EMBL" id="AE009951">
    <property type="protein sequence ID" value="AAL95522.1"/>
    <property type="molecule type" value="Genomic_DNA"/>
</dbReference>
<dbReference type="RefSeq" id="NP_604223.1">
    <property type="nucleotide sequence ID" value="NC_003454.1"/>
</dbReference>
<dbReference type="RefSeq" id="WP_011017071.1">
    <property type="nucleotide sequence ID" value="NZ_OZ209243.1"/>
</dbReference>
<dbReference type="SMR" id="Q8RE08"/>
<dbReference type="FunCoup" id="Q8RE08">
    <property type="interactions" value="319"/>
</dbReference>
<dbReference type="STRING" id="190304.FN1326"/>
<dbReference type="PaxDb" id="190304-FN1326"/>
<dbReference type="EnsemblBacteria" id="AAL95522">
    <property type="protein sequence ID" value="AAL95522"/>
    <property type="gene ID" value="FN1326"/>
</dbReference>
<dbReference type="KEGG" id="fnu:FN1326"/>
<dbReference type="PATRIC" id="fig|190304.8.peg.1890"/>
<dbReference type="eggNOG" id="COG0020">
    <property type="taxonomic scope" value="Bacteria"/>
</dbReference>
<dbReference type="HOGENOM" id="CLU_038505_1_1_0"/>
<dbReference type="InParanoid" id="Q8RE08"/>
<dbReference type="BioCyc" id="FNUC190304:G1FZS-1901-MONOMER"/>
<dbReference type="Proteomes" id="UP000002521">
    <property type="component" value="Chromosome"/>
</dbReference>
<dbReference type="GO" id="GO:0000287">
    <property type="term" value="F:magnesium ion binding"/>
    <property type="evidence" value="ECO:0007669"/>
    <property type="project" value="UniProtKB-UniRule"/>
</dbReference>
<dbReference type="GO" id="GO:0004659">
    <property type="term" value="F:prenyltransferase activity"/>
    <property type="evidence" value="ECO:0007669"/>
    <property type="project" value="UniProtKB-UniRule"/>
</dbReference>
<dbReference type="GO" id="GO:0016094">
    <property type="term" value="P:polyprenol biosynthetic process"/>
    <property type="evidence" value="ECO:0000318"/>
    <property type="project" value="GO_Central"/>
</dbReference>
<dbReference type="CDD" id="cd00475">
    <property type="entry name" value="Cis_IPPS"/>
    <property type="match status" value="1"/>
</dbReference>
<dbReference type="FunFam" id="3.40.1180.10:FF:000001">
    <property type="entry name" value="(2E,6E)-farnesyl-diphosphate-specific ditrans,polycis-undecaprenyl-diphosphate synthase"/>
    <property type="match status" value="1"/>
</dbReference>
<dbReference type="Gene3D" id="3.40.1180.10">
    <property type="entry name" value="Decaprenyl diphosphate synthase-like"/>
    <property type="match status" value="1"/>
</dbReference>
<dbReference type="HAMAP" id="MF_01139">
    <property type="entry name" value="ISPT"/>
    <property type="match status" value="1"/>
</dbReference>
<dbReference type="InterPro" id="IPR001441">
    <property type="entry name" value="UPP_synth-like"/>
</dbReference>
<dbReference type="InterPro" id="IPR018520">
    <property type="entry name" value="UPP_synth-like_CS"/>
</dbReference>
<dbReference type="InterPro" id="IPR036424">
    <property type="entry name" value="UPP_synth-like_sf"/>
</dbReference>
<dbReference type="NCBIfam" id="NF011405">
    <property type="entry name" value="PRK14830.1"/>
    <property type="match status" value="1"/>
</dbReference>
<dbReference type="NCBIfam" id="TIGR00055">
    <property type="entry name" value="uppS"/>
    <property type="match status" value="1"/>
</dbReference>
<dbReference type="PANTHER" id="PTHR10291:SF0">
    <property type="entry name" value="DEHYDRODOLICHYL DIPHOSPHATE SYNTHASE 2"/>
    <property type="match status" value="1"/>
</dbReference>
<dbReference type="PANTHER" id="PTHR10291">
    <property type="entry name" value="DEHYDRODOLICHYL DIPHOSPHATE SYNTHASE FAMILY MEMBER"/>
    <property type="match status" value="1"/>
</dbReference>
<dbReference type="Pfam" id="PF01255">
    <property type="entry name" value="Prenyltransf"/>
    <property type="match status" value="1"/>
</dbReference>
<dbReference type="SUPFAM" id="SSF64005">
    <property type="entry name" value="Undecaprenyl diphosphate synthase"/>
    <property type="match status" value="1"/>
</dbReference>
<dbReference type="PROSITE" id="PS01066">
    <property type="entry name" value="UPP_SYNTHASE"/>
    <property type="match status" value="1"/>
</dbReference>
<reference key="1">
    <citation type="journal article" date="2002" name="J. Bacteriol.">
        <title>Genome sequence and analysis of the oral bacterium Fusobacterium nucleatum strain ATCC 25586.</title>
        <authorList>
            <person name="Kapatral V."/>
            <person name="Anderson I."/>
            <person name="Ivanova N."/>
            <person name="Reznik G."/>
            <person name="Los T."/>
            <person name="Lykidis A."/>
            <person name="Bhattacharyya A."/>
            <person name="Bartman A."/>
            <person name="Gardner W."/>
            <person name="Grechkin G."/>
            <person name="Zhu L."/>
            <person name="Vasieva O."/>
            <person name="Chu L."/>
            <person name="Kogan Y."/>
            <person name="Chaga O."/>
            <person name="Goltsman E."/>
            <person name="Bernal A."/>
            <person name="Larsen N."/>
            <person name="D'Souza M."/>
            <person name="Walunas T."/>
            <person name="Pusch G."/>
            <person name="Haselkorn R."/>
            <person name="Fonstein M."/>
            <person name="Kyrpides N.C."/>
            <person name="Overbeek R."/>
        </authorList>
    </citation>
    <scope>NUCLEOTIDE SEQUENCE [LARGE SCALE GENOMIC DNA]</scope>
    <source>
        <strain>ATCC 25586 / DSM 15643 / BCRC 10681 / CIP 101130 / JCM 8532 / KCTC 2640 / LMG 13131 / VPI 4355</strain>
    </source>
</reference>
<accession>Q8RE08</accession>
<evidence type="ECO:0000255" key="1">
    <source>
        <dbReference type="HAMAP-Rule" id="MF_01139"/>
    </source>
</evidence>
<name>ISPT_FUSNN</name>
<organism>
    <name type="scientific">Fusobacterium nucleatum subsp. nucleatum (strain ATCC 25586 / DSM 15643 / BCRC 10681 / CIP 101130 / JCM 8532 / KCTC 2640 / LMG 13131 / VPI 4355)</name>
    <dbReference type="NCBI Taxonomy" id="190304"/>
    <lineage>
        <taxon>Bacteria</taxon>
        <taxon>Fusobacteriati</taxon>
        <taxon>Fusobacteriota</taxon>
        <taxon>Fusobacteriia</taxon>
        <taxon>Fusobacteriales</taxon>
        <taxon>Fusobacteriaceae</taxon>
        <taxon>Fusobacterium</taxon>
    </lineage>
</organism>
<protein>
    <recommendedName>
        <fullName evidence="1">Isoprenyl transferase</fullName>
        <ecNumber evidence="1">2.5.1.-</ecNumber>
    </recommendedName>
</protein>
<sequence>MEKNIPKHIAIIMDGNGRWAKKRGLARSFGHMEGAKTLRKALEYLTEIGVKYLTVYAFSTENWNRPQDEVSTLMKLFLKYIKNERKNMMKNKIRFFVSGRKNNVPEKLQKEIEKLEEETKNNDKITLNIAFNYGSRAEIVDAVNRIIKDGKENITEEDFSKYLYNDFPDPDLVIRTSGEMRISNFLLWQIAYSELYITDVLWPDFDEKEIDKAIESYNQRERRFGGVKNV</sequence>
<proteinExistence type="inferred from homology"/>
<gene>
    <name evidence="1" type="primary">uppS</name>
    <name type="ordered locus">FN1326</name>
</gene>
<comment type="function">
    <text evidence="1">Catalyzes the condensation of isopentenyl diphosphate (IPP) with allylic pyrophosphates generating different type of terpenoids.</text>
</comment>
<comment type="cofactor">
    <cofactor evidence="1">
        <name>Mg(2+)</name>
        <dbReference type="ChEBI" id="CHEBI:18420"/>
    </cofactor>
    <text evidence="1">Binds 2 magnesium ions per subunit.</text>
</comment>
<comment type="subunit">
    <text evidence="1">Homodimer.</text>
</comment>
<comment type="similarity">
    <text evidence="1">Belongs to the UPP synthase family.</text>
</comment>
<keyword id="KW-0460">Magnesium</keyword>
<keyword id="KW-0479">Metal-binding</keyword>
<keyword id="KW-1185">Reference proteome</keyword>
<keyword id="KW-0808">Transferase</keyword>